<protein>
    <recommendedName>
        <fullName evidence="27">Ribosomal oxygenase 2</fullName>
    </recommendedName>
    <alternativeName>
        <fullName>60S ribosomal protein L27a histidine hydroxylase</fullName>
    </alternativeName>
    <alternativeName>
        <fullName>Bifunctional lysine-specific demethylase and histidyl-hydroxylase MINA</fullName>
        <ecNumber evidence="14">1.14.11.79</ecNumber>
    </alternativeName>
    <alternativeName>
        <fullName>Histone lysine demethylase MINA</fullName>
    </alternativeName>
    <alternativeName>
        <fullName>MYC-induced nuclear antigen</fullName>
    </alternativeName>
    <alternativeName>
        <fullName>Mineral dust-induced gene protein</fullName>
    </alternativeName>
    <alternativeName>
        <fullName>Nucleolar protein 52</fullName>
    </alternativeName>
    <alternativeName>
        <fullName>Ribosomal oxygenase MINA</fullName>
        <shortName>ROX</shortName>
    </alternativeName>
</protein>
<proteinExistence type="evidence at protein level"/>
<comment type="function">
    <text evidence="3 4 8 9 10 11 13 14">Oxygenase that can act as both a histone lysine demethylase and a ribosomal histidine hydroxylase. Is involved in the demethylation of trimethylated 'Lys-9' on histone H3 (H3K9me3), leading to an increase in ribosomal RNA expression. Also catalyzes the hydroxylation of 60S ribosomal protein L27a on 'His-39'. May play an important role in cell growth and survival. May be involved in ribosome biogenesis, most likely during the assembly process of pre-ribosomal particles.</text>
</comment>
<comment type="catalytic activity">
    <reaction evidence="14">
        <text>L-histidyl-[protein] + 2-oxoglutarate + O2 = (3S)-3-hydroxy-L-histidyl-[protein] + succinate + CO2</text>
        <dbReference type="Rhea" id="RHEA:54256"/>
        <dbReference type="Rhea" id="RHEA-COMP:9745"/>
        <dbReference type="Rhea" id="RHEA-COMP:13840"/>
        <dbReference type="ChEBI" id="CHEBI:15379"/>
        <dbReference type="ChEBI" id="CHEBI:16526"/>
        <dbReference type="ChEBI" id="CHEBI:16810"/>
        <dbReference type="ChEBI" id="CHEBI:29979"/>
        <dbReference type="ChEBI" id="CHEBI:30031"/>
        <dbReference type="ChEBI" id="CHEBI:138021"/>
        <dbReference type="EC" id="1.14.11.79"/>
    </reaction>
</comment>
<comment type="catalytic activity">
    <reaction evidence="14">
        <text>L-histidyl-[ribosomal protein uL15] + 2-oxoglutarate + O2 = (3S)-3-hydroxy-L-histidyl-[ribosomal protein uL15] + succinate + CO2</text>
        <dbReference type="Rhea" id="RHEA:54024"/>
        <dbReference type="Rhea" id="RHEA-COMP:13760"/>
        <dbReference type="Rhea" id="RHEA-COMP:13761"/>
        <dbReference type="ChEBI" id="CHEBI:15379"/>
        <dbReference type="ChEBI" id="CHEBI:16526"/>
        <dbReference type="ChEBI" id="CHEBI:16810"/>
        <dbReference type="ChEBI" id="CHEBI:29979"/>
        <dbReference type="ChEBI" id="CHEBI:30031"/>
        <dbReference type="ChEBI" id="CHEBI:138021"/>
    </reaction>
</comment>
<comment type="cofactor">
    <cofactor evidence="1">
        <name>Fe(2+)</name>
        <dbReference type="ChEBI" id="CHEBI:29033"/>
    </cofactor>
    <text evidence="1">Binds 1 Fe(2+) ion per subunit.</text>
</comment>
<comment type="interaction">
    <interactant intactId="EBI-751580">
        <id>Q8IUF8</id>
    </interactant>
    <interactant intactId="EBI-739832">
        <id>Q8TBB1</id>
        <label>LNX1</label>
    </interactant>
    <organismsDiffer>false</organismsDiffer>
    <experiments>3</experiments>
</comment>
<comment type="interaction">
    <interactant intactId="EBI-751580">
        <id>Q8IUF8</id>
    </interactant>
    <interactant intactId="EBI-751580">
        <id>Q8IUF8</id>
        <label>RIOX2</label>
    </interactant>
    <organismsDiffer>false</organismsDiffer>
    <experiments>5</experiments>
</comment>
<comment type="subcellular location">
    <subcellularLocation>
        <location evidence="3 9">Nucleus</location>
    </subcellularLocation>
    <subcellularLocation>
        <location evidence="3 9">Nucleus</location>
        <location evidence="3 9">Nucleolus</location>
    </subcellularLocation>
</comment>
<comment type="alternative products">
    <event type="alternative splicing"/>
    <isoform>
        <id>Q8IUF8-1</id>
        <name evidence="3 5 6 7 10 15">1</name>
        <sequence type="displayed"/>
    </isoform>
    <isoform>
        <id>Q8IUF8-2</id>
        <name evidence="3">2</name>
        <sequence type="described" ref="VSP_052589 VSP_052590"/>
    </isoform>
    <isoform>
        <id>Q8IUF8-3</id>
        <name evidence="10">3</name>
        <sequence type="described" ref="VSP_052587 VSP_052588"/>
    </isoform>
    <isoform>
        <id>Q8IUF8-4</id>
        <name>4</name>
        <sequence type="described" ref="VSP_038373"/>
    </isoform>
</comment>
<comment type="tissue specificity">
    <text evidence="4 8 10 13">Expressed in liver, skeletal muscle, heart, pancreas, and placenta. Not detected in brain, lung or kidney. Expressed in several lung cancer tissues, but is barely detected in the adjacent non-cancerous tissues. Also highly expressed in several esophageal squamous cell carcinoma (ESCC), and colon cancer tissues, and in various cancer cell lines.</text>
</comment>
<comment type="induction">
    <text evidence="3 10">Up-regulated in response to MYC, in alveolar macrophages from coal miners and in silica particle-treated A549 lung cancer cells.</text>
</comment>
<comment type="similarity">
    <text evidence="19">Belongs to the ROX family. MINA53 subfamily.</text>
</comment>
<comment type="sequence caution" evidence="19">
    <conflict type="erroneous termination">
        <sequence resource="EMBL-CDS" id="CAH10679"/>
    </conflict>
    <text>Truncated C-terminus.</text>
</comment>
<comment type="online information" name="Atlas of Genetics and Cytogenetics in Oncology and Haematology">
    <link uri="https://atlasgeneticsoncology.org/gene/44409/MINA"/>
</comment>
<keyword id="KW-0002">3D-structure</keyword>
<keyword id="KW-0025">Alternative splicing</keyword>
<keyword id="KW-0223">Dioxygenase</keyword>
<keyword id="KW-0408">Iron</keyword>
<keyword id="KW-0479">Metal-binding</keyword>
<keyword id="KW-0539">Nucleus</keyword>
<keyword id="KW-0560">Oxidoreductase</keyword>
<keyword id="KW-0597">Phosphoprotein</keyword>
<keyword id="KW-1267">Proteomics identification</keyword>
<keyword id="KW-1185">Reference proteome</keyword>
<keyword id="KW-0690">Ribosome biogenesis</keyword>
<keyword id="KW-0804">Transcription</keyword>
<keyword id="KW-0805">Transcription regulation</keyword>
<evidence type="ECO:0000250" key="1"/>
<evidence type="ECO:0000255" key="2">
    <source>
        <dbReference type="PROSITE-ProRule" id="PRU00538"/>
    </source>
</evidence>
<evidence type="ECO:0000269" key="3">
    <source>
    </source>
</evidence>
<evidence type="ECO:0000269" key="4">
    <source>
    </source>
</evidence>
<evidence type="ECO:0000269" key="5">
    <source>
    </source>
</evidence>
<evidence type="ECO:0000269" key="6">
    <source>
    </source>
</evidence>
<evidence type="ECO:0000269" key="7">
    <source>
    </source>
</evidence>
<evidence type="ECO:0000269" key="8">
    <source>
    </source>
</evidence>
<evidence type="ECO:0000269" key="9">
    <source>
    </source>
</evidence>
<evidence type="ECO:0000269" key="10">
    <source>
    </source>
</evidence>
<evidence type="ECO:0000269" key="11">
    <source>
    </source>
</evidence>
<evidence type="ECO:0000269" key="12">
    <source>
    </source>
</evidence>
<evidence type="ECO:0000269" key="13">
    <source>
    </source>
</evidence>
<evidence type="ECO:0000269" key="14">
    <source>
    </source>
</evidence>
<evidence type="ECO:0000269" key="15">
    <source ref="4"/>
</evidence>
<evidence type="ECO:0000303" key="16">
    <source>
    </source>
</evidence>
<evidence type="ECO:0000303" key="17">
    <source>
    </source>
</evidence>
<evidence type="ECO:0000303" key="18">
    <source>
    </source>
</evidence>
<evidence type="ECO:0000305" key="19"/>
<evidence type="ECO:0000312" key="20">
    <source>
        <dbReference type="EMBL" id="AAH14928.1"/>
    </source>
</evidence>
<evidence type="ECO:0000312" key="21">
    <source>
        <dbReference type="EMBL" id="AAP59421.1"/>
    </source>
</evidence>
<evidence type="ECO:0000312" key="22">
    <source>
        <dbReference type="EMBL" id="AAR21572.1"/>
    </source>
</evidence>
<evidence type="ECO:0000312" key="23">
    <source>
        <dbReference type="EMBL" id="AAR27293.1"/>
    </source>
</evidence>
<evidence type="ECO:0000312" key="24">
    <source>
        <dbReference type="EMBL" id="ABE28016.1"/>
    </source>
</evidence>
<evidence type="ECO:0000312" key="25">
    <source>
        <dbReference type="EMBL" id="BAB55024.1"/>
    </source>
</evidence>
<evidence type="ECO:0000312" key="26">
    <source>
        <dbReference type="EMBL" id="BAC16537.1"/>
    </source>
</evidence>
<evidence type="ECO:0000312" key="27">
    <source>
        <dbReference type="HGNC" id="HGNC:19441"/>
    </source>
</evidence>
<evidence type="ECO:0007744" key="28">
    <source>
    </source>
</evidence>
<evidence type="ECO:0007829" key="29">
    <source>
        <dbReference type="PDB" id="4BXF"/>
    </source>
</evidence>
<name>RIOX2_HUMAN</name>
<dbReference type="EC" id="1.14.11.79" evidence="14"/>
<dbReference type="EMBL" id="AB083189">
    <property type="protein sequence ID" value="BAC16537.1"/>
    <property type="molecule type" value="mRNA"/>
</dbReference>
<dbReference type="EMBL" id="AB083190">
    <property type="protein sequence ID" value="BAC16358.1"/>
    <property type="molecule type" value="mRNA"/>
</dbReference>
<dbReference type="EMBL" id="AB083191">
    <property type="protein sequence ID" value="BAC16359.1"/>
    <property type="molecule type" value="mRNA"/>
</dbReference>
<dbReference type="EMBL" id="AB083192">
    <property type="protein sequence ID" value="BAC16360.1"/>
    <property type="molecule type" value="mRNA"/>
</dbReference>
<dbReference type="EMBL" id="AB083193">
    <property type="protein sequence ID" value="BAC16361.1"/>
    <property type="molecule type" value="mRNA"/>
</dbReference>
<dbReference type="EMBL" id="AY390536">
    <property type="protein sequence ID" value="AAR27293.1"/>
    <property type="molecule type" value="mRNA"/>
</dbReference>
<dbReference type="EMBL" id="AY302110">
    <property type="protein sequence ID" value="AAP59421.1"/>
    <property type="molecule type" value="mRNA"/>
</dbReference>
<dbReference type="EMBL" id="AY456380">
    <property type="protein sequence ID" value="AAR21572.1"/>
    <property type="molecule type" value="mRNA"/>
</dbReference>
<dbReference type="EMBL" id="DQ453796">
    <property type="protein sequence ID" value="ABE28016.1"/>
    <property type="molecule type" value="mRNA"/>
</dbReference>
<dbReference type="EMBL" id="AK027299">
    <property type="protein sequence ID" value="BAB55024.1"/>
    <property type="molecule type" value="mRNA"/>
</dbReference>
<dbReference type="EMBL" id="AC026100">
    <property type="status" value="NOT_ANNOTATED_CDS"/>
    <property type="molecule type" value="Genomic_DNA"/>
</dbReference>
<dbReference type="EMBL" id="AC110491">
    <property type="status" value="NOT_ANNOTATED_CDS"/>
    <property type="molecule type" value="Genomic_DNA"/>
</dbReference>
<dbReference type="EMBL" id="CH471052">
    <property type="protein sequence ID" value="EAW79872.1"/>
    <property type="molecule type" value="Genomic_DNA"/>
</dbReference>
<dbReference type="EMBL" id="CH471052">
    <property type="protein sequence ID" value="EAW79873.1"/>
    <property type="molecule type" value="Genomic_DNA"/>
</dbReference>
<dbReference type="EMBL" id="BC014928">
    <property type="protein sequence ID" value="AAH14928.1"/>
    <property type="molecule type" value="mRNA"/>
</dbReference>
<dbReference type="EMBL" id="CR627479">
    <property type="protein sequence ID" value="CAH10679.1"/>
    <property type="status" value="ALT_TERM"/>
    <property type="molecule type" value="mRNA"/>
</dbReference>
<dbReference type="CCDS" id="CCDS2929.1">
    <molecule id="Q8IUF8-4"/>
</dbReference>
<dbReference type="CCDS" id="CCDS43114.1">
    <molecule id="Q8IUF8-1"/>
</dbReference>
<dbReference type="RefSeq" id="NP_001035998.1">
    <molecule id="Q8IUF8-1"/>
    <property type="nucleotide sequence ID" value="NM_001042533.3"/>
</dbReference>
<dbReference type="RefSeq" id="NP_001248758.1">
    <molecule id="Q8IUF8-4"/>
    <property type="nucleotide sequence ID" value="NM_001261829.2"/>
</dbReference>
<dbReference type="RefSeq" id="NP_116167.3">
    <molecule id="Q8IUF8-4"/>
    <property type="nucleotide sequence ID" value="NM_032778.5"/>
</dbReference>
<dbReference type="RefSeq" id="NP_694822.2">
    <molecule id="Q8IUF8-1"/>
    <property type="nucleotide sequence ID" value="NM_153182.4"/>
</dbReference>
<dbReference type="RefSeq" id="XP_005247895.1">
    <molecule id="Q8IUF8-1"/>
    <property type="nucleotide sequence ID" value="XM_005247838.5"/>
</dbReference>
<dbReference type="RefSeq" id="XP_047305041.1">
    <molecule id="Q8IUF8-4"/>
    <property type="nucleotide sequence ID" value="XM_047449085.1"/>
</dbReference>
<dbReference type="RefSeq" id="XP_047305043.1">
    <molecule id="Q8IUF8-2"/>
    <property type="nucleotide sequence ID" value="XM_047449087.1"/>
</dbReference>
<dbReference type="RefSeq" id="XP_054204120.1">
    <molecule id="Q8IUF8-2"/>
    <property type="nucleotide sequence ID" value="XM_054348145.1"/>
</dbReference>
<dbReference type="PDB" id="2XDV">
    <property type="method" value="X-ray"/>
    <property type="resolution" value="2.57 A"/>
    <property type="chains" value="A=26-465"/>
</dbReference>
<dbReference type="PDB" id="4BU2">
    <property type="method" value="X-ray"/>
    <property type="resolution" value="2.78 A"/>
    <property type="chains" value="A=26-465"/>
</dbReference>
<dbReference type="PDB" id="4BXF">
    <property type="method" value="X-ray"/>
    <property type="resolution" value="2.05 A"/>
    <property type="chains" value="A/B=26-465"/>
</dbReference>
<dbReference type="PDBsum" id="2XDV"/>
<dbReference type="PDBsum" id="4BU2"/>
<dbReference type="PDBsum" id="4BXF"/>
<dbReference type="SMR" id="Q8IUF8"/>
<dbReference type="BioGRID" id="124309">
    <property type="interactions" value="108"/>
</dbReference>
<dbReference type="DIP" id="DIP-28141N"/>
<dbReference type="FunCoup" id="Q8IUF8">
    <property type="interactions" value="1210"/>
</dbReference>
<dbReference type="IntAct" id="Q8IUF8">
    <property type="interactions" value="67"/>
</dbReference>
<dbReference type="MINT" id="Q8IUF8"/>
<dbReference type="STRING" id="9606.ENSP00000328251"/>
<dbReference type="BindingDB" id="Q8IUF8"/>
<dbReference type="ChEMBL" id="CHEMBL5465328"/>
<dbReference type="GlyGen" id="Q8IUF8">
    <property type="glycosylation" value="2 sites, 1 O-linked glycan (1 site)"/>
</dbReference>
<dbReference type="iPTMnet" id="Q8IUF8"/>
<dbReference type="PhosphoSitePlus" id="Q8IUF8"/>
<dbReference type="SwissPalm" id="Q8IUF8"/>
<dbReference type="BioMuta" id="RIOX2"/>
<dbReference type="DMDM" id="74750624"/>
<dbReference type="jPOST" id="Q8IUF8"/>
<dbReference type="MassIVE" id="Q8IUF8"/>
<dbReference type="PaxDb" id="9606-ENSP00000328251"/>
<dbReference type="PeptideAtlas" id="Q8IUF8"/>
<dbReference type="ProteomicsDB" id="70558">
    <molecule id="Q8IUF8-1"/>
</dbReference>
<dbReference type="ProteomicsDB" id="70559">
    <molecule id="Q8IUF8-2"/>
</dbReference>
<dbReference type="ProteomicsDB" id="70560">
    <molecule id="Q8IUF8-3"/>
</dbReference>
<dbReference type="ProteomicsDB" id="70561">
    <molecule id="Q8IUF8-4"/>
</dbReference>
<dbReference type="Pumba" id="Q8IUF8"/>
<dbReference type="TopDownProteomics" id="Q8IUF8-2">
    <molecule id="Q8IUF8-2"/>
</dbReference>
<dbReference type="Antibodypedia" id="2005">
    <property type="antibodies" value="382 antibodies from 37 providers"/>
</dbReference>
<dbReference type="DNASU" id="84864"/>
<dbReference type="Ensembl" id="ENST00000333396.11">
    <molecule id="Q8IUF8-1"/>
    <property type="protein sequence ID" value="ENSP00000328251.6"/>
    <property type="gene ID" value="ENSG00000170854.18"/>
</dbReference>
<dbReference type="Ensembl" id="ENST00000360258.8">
    <molecule id="Q8IUF8-4"/>
    <property type="protein sequence ID" value="ENSP00000353395.4"/>
    <property type="gene ID" value="ENSG00000170854.18"/>
</dbReference>
<dbReference type="Ensembl" id="ENST00000394198.7">
    <molecule id="Q8IUF8-1"/>
    <property type="protein sequence ID" value="ENSP00000377748.2"/>
    <property type="gene ID" value="ENSG00000170854.18"/>
</dbReference>
<dbReference type="Ensembl" id="ENST00000514314.5">
    <molecule id="Q8IUF8-2"/>
    <property type="protein sequence ID" value="ENSP00000424955.1"/>
    <property type="gene ID" value="ENSG00000170854.18"/>
</dbReference>
<dbReference type="GeneID" id="84864"/>
<dbReference type="KEGG" id="hsa:84864"/>
<dbReference type="MANE-Select" id="ENST00000394198.7">
    <property type="protein sequence ID" value="ENSP00000377748.2"/>
    <property type="RefSeq nucleotide sequence ID" value="NM_153182.4"/>
    <property type="RefSeq protein sequence ID" value="NP_694822.2"/>
</dbReference>
<dbReference type="UCSC" id="uc003drz.3">
    <molecule id="Q8IUF8-1"/>
    <property type="organism name" value="human"/>
</dbReference>
<dbReference type="AGR" id="HGNC:19441"/>
<dbReference type="CTD" id="84864"/>
<dbReference type="DisGeNET" id="84864"/>
<dbReference type="GeneCards" id="RIOX2"/>
<dbReference type="HGNC" id="HGNC:19441">
    <property type="gene designation" value="RIOX2"/>
</dbReference>
<dbReference type="HPA" id="ENSG00000170854">
    <property type="expression patterns" value="Low tissue specificity"/>
</dbReference>
<dbReference type="MIM" id="612049">
    <property type="type" value="gene"/>
</dbReference>
<dbReference type="neXtProt" id="NX_Q8IUF8"/>
<dbReference type="OpenTargets" id="ENSG00000170854"/>
<dbReference type="PharmGKB" id="PA134991047"/>
<dbReference type="VEuPathDB" id="HostDB:ENSG00000170854"/>
<dbReference type="eggNOG" id="KOG3706">
    <property type="taxonomic scope" value="Eukaryota"/>
</dbReference>
<dbReference type="GeneTree" id="ENSGT00390000000083"/>
<dbReference type="HOGENOM" id="CLU_013645_0_1_1"/>
<dbReference type="InParanoid" id="Q8IUF8"/>
<dbReference type="OMA" id="IRREMVY"/>
<dbReference type="OrthoDB" id="425950at2759"/>
<dbReference type="PAN-GO" id="Q8IUF8">
    <property type="GO annotations" value="5 GO annotations based on evolutionary models"/>
</dbReference>
<dbReference type="PhylomeDB" id="Q8IUF8"/>
<dbReference type="TreeFam" id="TF318659"/>
<dbReference type="BioCyc" id="MetaCyc:ENSG00000170854-MONOMER"/>
<dbReference type="PathwayCommons" id="Q8IUF8"/>
<dbReference type="Reactome" id="R-HSA-3214842">
    <property type="pathway name" value="HDMs demethylate histones"/>
</dbReference>
<dbReference type="Reactome" id="R-HSA-9629569">
    <property type="pathway name" value="Protein hydroxylation"/>
</dbReference>
<dbReference type="SignaLink" id="Q8IUF8"/>
<dbReference type="BioGRID-ORCS" id="84864">
    <property type="hits" value="12 hits in 1165 CRISPR screens"/>
</dbReference>
<dbReference type="CD-CODE" id="91857CE7">
    <property type="entry name" value="Nucleolus"/>
</dbReference>
<dbReference type="ChiTaRS" id="MINA">
    <property type="organism name" value="human"/>
</dbReference>
<dbReference type="EvolutionaryTrace" id="Q8IUF8"/>
<dbReference type="GeneWiki" id="MINA"/>
<dbReference type="GeneWiki" id="MYC-induced_nuclear_antigen"/>
<dbReference type="GenomeRNAi" id="84864"/>
<dbReference type="Pharos" id="Q8IUF8">
    <property type="development level" value="Tbio"/>
</dbReference>
<dbReference type="PRO" id="PR:Q8IUF8"/>
<dbReference type="Proteomes" id="UP000005640">
    <property type="component" value="Chromosome 3"/>
</dbReference>
<dbReference type="RNAct" id="Q8IUF8">
    <property type="molecule type" value="protein"/>
</dbReference>
<dbReference type="Bgee" id="ENSG00000170854">
    <property type="expression patterns" value="Expressed in secondary oocyte and 209 other cell types or tissues"/>
</dbReference>
<dbReference type="ExpressionAtlas" id="Q8IUF8">
    <property type="expression patterns" value="baseline and differential"/>
</dbReference>
<dbReference type="GO" id="GO:0005829">
    <property type="term" value="C:cytosol"/>
    <property type="evidence" value="ECO:0007669"/>
    <property type="project" value="Ensembl"/>
</dbReference>
<dbReference type="GO" id="GO:0005730">
    <property type="term" value="C:nucleolus"/>
    <property type="evidence" value="ECO:0000314"/>
    <property type="project" value="HPA"/>
</dbReference>
<dbReference type="GO" id="GO:0005654">
    <property type="term" value="C:nucleoplasm"/>
    <property type="evidence" value="ECO:0000314"/>
    <property type="project" value="HPA"/>
</dbReference>
<dbReference type="GO" id="GO:0005667">
    <property type="term" value="C:transcription regulator complex"/>
    <property type="evidence" value="ECO:0007669"/>
    <property type="project" value="Ensembl"/>
</dbReference>
<dbReference type="GO" id="GO:0032452">
    <property type="term" value="F:histone demethylase activity"/>
    <property type="evidence" value="ECO:0000304"/>
    <property type="project" value="Reactome"/>
</dbReference>
<dbReference type="GO" id="GO:0051864">
    <property type="term" value="F:histone H3K36 demethylase activity"/>
    <property type="evidence" value="ECO:0000318"/>
    <property type="project" value="GO_Central"/>
</dbReference>
<dbReference type="GO" id="GO:0032453">
    <property type="term" value="F:histone H3K4 demethylase activity"/>
    <property type="evidence" value="ECO:0000318"/>
    <property type="project" value="GO_Central"/>
</dbReference>
<dbReference type="GO" id="GO:0042802">
    <property type="term" value="F:identical protein binding"/>
    <property type="evidence" value="ECO:0000353"/>
    <property type="project" value="IntAct"/>
</dbReference>
<dbReference type="GO" id="GO:0046872">
    <property type="term" value="F:metal ion binding"/>
    <property type="evidence" value="ECO:0007669"/>
    <property type="project" value="UniProtKB-KW"/>
</dbReference>
<dbReference type="GO" id="GO:0036139">
    <property type="term" value="F:peptidyl-histidine dioxygenase activity"/>
    <property type="evidence" value="ECO:0000314"/>
    <property type="project" value="UniProtKB"/>
</dbReference>
<dbReference type="GO" id="GO:0003714">
    <property type="term" value="F:transcription corepressor activity"/>
    <property type="evidence" value="ECO:0007669"/>
    <property type="project" value="Ensembl"/>
</dbReference>
<dbReference type="GO" id="GO:0042254">
    <property type="term" value="P:ribosome biogenesis"/>
    <property type="evidence" value="ECO:0007669"/>
    <property type="project" value="UniProtKB-KW"/>
</dbReference>
<dbReference type="FunFam" id="2.60.120.650:FF:000032">
    <property type="entry name" value="Ribosomal oxygenase 2"/>
    <property type="match status" value="1"/>
</dbReference>
<dbReference type="FunFam" id="3.90.930.40:FF:000002">
    <property type="entry name" value="Ribosomal oxygenase 2"/>
    <property type="match status" value="1"/>
</dbReference>
<dbReference type="FunFam" id="1.10.10.1500:FF:000002">
    <property type="entry name" value="ribosomal oxygenase 2 isoform X1"/>
    <property type="match status" value="1"/>
</dbReference>
<dbReference type="Gene3D" id="3.90.930.40">
    <property type="match status" value="1"/>
</dbReference>
<dbReference type="Gene3D" id="2.60.120.650">
    <property type="entry name" value="Cupin"/>
    <property type="match status" value="1"/>
</dbReference>
<dbReference type="Gene3D" id="1.10.10.1500">
    <property type="entry name" value="JmjC domain-containing ribosomal oxygenase (ROX), dimer domain"/>
    <property type="match status" value="1"/>
</dbReference>
<dbReference type="InterPro" id="IPR003347">
    <property type="entry name" value="JmjC_dom"/>
</dbReference>
<dbReference type="InterPro" id="IPR039994">
    <property type="entry name" value="NO66-like"/>
</dbReference>
<dbReference type="InterPro" id="IPR046799">
    <property type="entry name" value="ROXA-like_wH"/>
</dbReference>
<dbReference type="PANTHER" id="PTHR13096">
    <property type="entry name" value="MINA53 MYC INDUCED NUCLEAR ANTIGEN"/>
    <property type="match status" value="1"/>
</dbReference>
<dbReference type="PANTHER" id="PTHR13096:SF7">
    <property type="entry name" value="RIBOSOMAL OXYGENASE 2"/>
    <property type="match status" value="1"/>
</dbReference>
<dbReference type="Pfam" id="PF08007">
    <property type="entry name" value="JmjC_2"/>
    <property type="match status" value="1"/>
</dbReference>
<dbReference type="Pfam" id="PF20514">
    <property type="entry name" value="ROXA-like_wH"/>
    <property type="match status" value="1"/>
</dbReference>
<dbReference type="SUPFAM" id="SSF51197">
    <property type="entry name" value="Clavaminate synthase-like"/>
    <property type="match status" value="1"/>
</dbReference>
<dbReference type="PROSITE" id="PS51184">
    <property type="entry name" value="JMJC"/>
    <property type="match status" value="1"/>
</dbReference>
<gene>
    <name evidence="27" type="primary">RIOX2</name>
    <name evidence="21" type="synonym">MDIG</name>
    <name type="synonym">MINA</name>
    <name evidence="26" type="synonym">MINA53</name>
    <name evidence="23" type="synonym">NO52</name>
</gene>
<organism>
    <name type="scientific">Homo sapiens</name>
    <name type="common">Human</name>
    <dbReference type="NCBI Taxonomy" id="9606"/>
    <lineage>
        <taxon>Eukaryota</taxon>
        <taxon>Metazoa</taxon>
        <taxon>Chordata</taxon>
        <taxon>Craniata</taxon>
        <taxon>Vertebrata</taxon>
        <taxon>Euteleostomi</taxon>
        <taxon>Mammalia</taxon>
        <taxon>Eutheria</taxon>
        <taxon>Euarchontoglires</taxon>
        <taxon>Primates</taxon>
        <taxon>Haplorrhini</taxon>
        <taxon>Catarrhini</taxon>
        <taxon>Hominidae</taxon>
        <taxon>Homo</taxon>
    </lineage>
</organism>
<sequence length="465" mass="52800">MPKKAKPTGSGKEEGPAPCKQMKLEAAGGPSALNFDSPSSLFESLISPIKTETFFKEFWEQKPLLIQRDDPALATYYGSLFKLTDLKSLCSRGMYYGRDVNVCRCVNGKKKVLNKDGKAHFLQLRKDFDQKRATIQFHQPQRFKDELWRIQEKLECYFGSLVGSNVYITPAGSQGLPPHYDDVEVFILQLEGEKHWRLYHPTVPLAREYSVEAEERIGRPVHEFMLKPGDLLYFPRGTIHQADTPAGLAHSTHVTISTYQNNSWGDFLLDTISGLVFDTAKEDVELRTGIPRQLLLQVESTTVATRRLSGFLRTLADRLEGTKELLSSDMKKDFIMHRLPPYSAGDGAELSTPGGKLPRLDSVVRLQFKDHIVLTVLPDQDQSDEAQEKMVYIYHSLKNSRETHMMGNEEETEFHGLRFPLSHLDALKQIWNSPAISVKDLKLTTDEEKESLVLSLWTECLIQVV</sequence>
<reference evidence="19 26" key="1">
    <citation type="journal article" date="2002" name="J. Biol. Chem.">
        <title>A novel myc target gene, mina53, that is involved in cell proliferation.</title>
        <authorList>
            <person name="Tsuneoka M."/>
            <person name="Koda Y."/>
            <person name="Soejima M."/>
            <person name="Teye K."/>
            <person name="Kimura H."/>
        </authorList>
    </citation>
    <scope>NUCLEOTIDE SEQUENCE [MRNA] (ISOFORMS 1; 2 AND 4)</scope>
    <scope>FUNCTION</scope>
    <scope>SUBCELLULAR LOCATION</scope>
    <scope>INDUCTION</scope>
    <source>
        <tissue evidence="26">Erythroleukemia</tissue>
    </source>
</reference>
<reference evidence="19 23" key="2">
    <citation type="journal article" date="2004" name="Mol. Biol. Cell">
        <title>NO66, a highly conserved dual location protein in the nucleolus and in a special type of synchronously replicating chromatin.</title>
        <authorList>
            <person name="Eilbracht J."/>
            <person name="Reichenzeller M."/>
            <person name="Hergt M."/>
            <person name="Schnoelzer M."/>
            <person name="Heid H."/>
            <person name="Stoehr M."/>
            <person name="Franke W.W."/>
            <person name="Schmidt-Zachmann M.S."/>
        </authorList>
    </citation>
    <scope>NUCLEOTIDE SEQUENCE [MRNA] (ISOFORM 1)</scope>
    <scope>VARIANT THR-386</scope>
</reference>
<reference evidence="19 21" key="3">
    <citation type="journal article" date="2005" name="Oncogene">
        <title>The human mineral dust-induced gene, mdig, is a cell growth regulating gene associated with lung cancer.</title>
        <authorList>
            <person name="Zhang Y."/>
            <person name="Lu Y."/>
            <person name="Yuan B.-Z."/>
            <person name="Castranova V."/>
            <person name="Shi X."/>
            <person name="Stauffer J.L."/>
            <person name="Demers L.M."/>
            <person name="Chen F."/>
        </authorList>
    </citation>
    <scope>NUCLEOTIDE SEQUENCE [MRNA] (ISOFORMS 1 AND 3)</scope>
    <scope>FUNCTION</scope>
    <scope>TISSUE SPECIFICITY</scope>
    <scope>INDUCTION</scope>
    <source>
        <tissue evidence="21">Alveolar macrophage</tissue>
        <tissue evidence="22">Lung cancer</tissue>
    </source>
</reference>
<reference evidence="19 24" key="4">
    <citation type="submission" date="2006-04" db="EMBL/GenBank/DDBJ databases">
        <title>MDIG gene, a potential biomarker for human lung cancer.</title>
        <authorList>
            <person name="Chang Q."/>
            <person name="Castranova V."/>
            <person name="Chen F."/>
        </authorList>
    </citation>
    <scope>NUCLEOTIDE SEQUENCE [MRNA] (ISOFORM 1)</scope>
    <source>
        <tissue evidence="24">Lung</tissue>
    </source>
</reference>
<reference evidence="19 25" key="5">
    <citation type="journal article" date="2004" name="Nat. Genet.">
        <title>Complete sequencing and characterization of 21,243 full-length human cDNAs.</title>
        <authorList>
            <person name="Ota T."/>
            <person name="Suzuki Y."/>
            <person name="Nishikawa T."/>
            <person name="Otsuki T."/>
            <person name="Sugiyama T."/>
            <person name="Irie R."/>
            <person name="Wakamatsu A."/>
            <person name="Hayashi K."/>
            <person name="Sato H."/>
            <person name="Nagai K."/>
            <person name="Kimura K."/>
            <person name="Makita H."/>
            <person name="Sekine M."/>
            <person name="Obayashi M."/>
            <person name="Nishi T."/>
            <person name="Shibahara T."/>
            <person name="Tanaka T."/>
            <person name="Ishii S."/>
            <person name="Yamamoto J."/>
            <person name="Saito K."/>
            <person name="Kawai Y."/>
            <person name="Isono Y."/>
            <person name="Nakamura Y."/>
            <person name="Nagahari K."/>
            <person name="Murakami K."/>
            <person name="Yasuda T."/>
            <person name="Iwayanagi T."/>
            <person name="Wagatsuma M."/>
            <person name="Shiratori A."/>
            <person name="Sudo H."/>
            <person name="Hosoiri T."/>
            <person name="Kaku Y."/>
            <person name="Kodaira H."/>
            <person name="Kondo H."/>
            <person name="Sugawara M."/>
            <person name="Takahashi M."/>
            <person name="Kanda K."/>
            <person name="Yokoi T."/>
            <person name="Furuya T."/>
            <person name="Kikkawa E."/>
            <person name="Omura Y."/>
            <person name="Abe K."/>
            <person name="Kamihara K."/>
            <person name="Katsuta N."/>
            <person name="Sato K."/>
            <person name="Tanikawa M."/>
            <person name="Yamazaki M."/>
            <person name="Ninomiya K."/>
            <person name="Ishibashi T."/>
            <person name="Yamashita H."/>
            <person name="Murakawa K."/>
            <person name="Fujimori K."/>
            <person name="Tanai H."/>
            <person name="Kimata M."/>
            <person name="Watanabe M."/>
            <person name="Hiraoka S."/>
            <person name="Chiba Y."/>
            <person name="Ishida S."/>
            <person name="Ono Y."/>
            <person name="Takiguchi S."/>
            <person name="Watanabe S."/>
            <person name="Yosida M."/>
            <person name="Hotuta T."/>
            <person name="Kusano J."/>
            <person name="Kanehori K."/>
            <person name="Takahashi-Fujii A."/>
            <person name="Hara H."/>
            <person name="Tanase T.-O."/>
            <person name="Nomura Y."/>
            <person name="Togiya S."/>
            <person name="Komai F."/>
            <person name="Hara R."/>
            <person name="Takeuchi K."/>
            <person name="Arita M."/>
            <person name="Imose N."/>
            <person name="Musashino K."/>
            <person name="Yuuki H."/>
            <person name="Oshima A."/>
            <person name="Sasaki N."/>
            <person name="Aotsuka S."/>
            <person name="Yoshikawa Y."/>
            <person name="Matsunawa H."/>
            <person name="Ichihara T."/>
            <person name="Shiohata N."/>
            <person name="Sano S."/>
            <person name="Moriya S."/>
            <person name="Momiyama H."/>
            <person name="Satoh N."/>
            <person name="Takami S."/>
            <person name="Terashima Y."/>
            <person name="Suzuki O."/>
            <person name="Nakagawa S."/>
            <person name="Senoh A."/>
            <person name="Mizoguchi H."/>
            <person name="Goto Y."/>
            <person name="Shimizu F."/>
            <person name="Wakebe H."/>
            <person name="Hishigaki H."/>
            <person name="Watanabe T."/>
            <person name="Sugiyama A."/>
            <person name="Takemoto M."/>
            <person name="Kawakami B."/>
            <person name="Yamazaki M."/>
            <person name="Watanabe K."/>
            <person name="Kumagai A."/>
            <person name="Itakura S."/>
            <person name="Fukuzumi Y."/>
            <person name="Fujimori Y."/>
            <person name="Komiyama M."/>
            <person name="Tashiro H."/>
            <person name="Tanigami A."/>
            <person name="Fujiwara T."/>
            <person name="Ono T."/>
            <person name="Yamada K."/>
            <person name="Fujii Y."/>
            <person name="Ozaki K."/>
            <person name="Hirao M."/>
            <person name="Ohmori Y."/>
            <person name="Kawabata A."/>
            <person name="Hikiji T."/>
            <person name="Kobatake N."/>
            <person name="Inagaki H."/>
            <person name="Ikema Y."/>
            <person name="Okamoto S."/>
            <person name="Okitani R."/>
            <person name="Kawakami T."/>
            <person name="Noguchi S."/>
            <person name="Itoh T."/>
            <person name="Shigeta K."/>
            <person name="Senba T."/>
            <person name="Matsumura K."/>
            <person name="Nakajima Y."/>
            <person name="Mizuno T."/>
            <person name="Morinaga M."/>
            <person name="Sasaki M."/>
            <person name="Togashi T."/>
            <person name="Oyama M."/>
            <person name="Hata H."/>
            <person name="Watanabe M."/>
            <person name="Komatsu T."/>
            <person name="Mizushima-Sugano J."/>
            <person name="Satoh T."/>
            <person name="Shirai Y."/>
            <person name="Takahashi Y."/>
            <person name="Nakagawa K."/>
            <person name="Okumura K."/>
            <person name="Nagase T."/>
            <person name="Nomura N."/>
            <person name="Kikuchi H."/>
            <person name="Masuho Y."/>
            <person name="Yamashita R."/>
            <person name="Nakai K."/>
            <person name="Yada T."/>
            <person name="Nakamura Y."/>
            <person name="Ohara O."/>
            <person name="Isogai T."/>
            <person name="Sugano S."/>
        </authorList>
    </citation>
    <scope>NUCLEOTIDE SEQUENCE [LARGE SCALE MRNA] (ISOFORMS 1 AND 4)</scope>
    <scope>VARIANT THR-386</scope>
    <source>
        <tissue evidence="25">Embryo</tissue>
    </source>
</reference>
<reference key="6">
    <citation type="journal article" date="2006" name="Nature">
        <title>The DNA sequence, annotation and analysis of human chromosome 3.</title>
        <authorList>
            <person name="Muzny D.M."/>
            <person name="Scherer S.E."/>
            <person name="Kaul R."/>
            <person name="Wang J."/>
            <person name="Yu J."/>
            <person name="Sudbrak R."/>
            <person name="Buhay C.J."/>
            <person name="Chen R."/>
            <person name="Cree A."/>
            <person name="Ding Y."/>
            <person name="Dugan-Rocha S."/>
            <person name="Gill R."/>
            <person name="Gunaratne P."/>
            <person name="Harris R.A."/>
            <person name="Hawes A.C."/>
            <person name="Hernandez J."/>
            <person name="Hodgson A.V."/>
            <person name="Hume J."/>
            <person name="Jackson A."/>
            <person name="Khan Z.M."/>
            <person name="Kovar-Smith C."/>
            <person name="Lewis L.R."/>
            <person name="Lozado R.J."/>
            <person name="Metzker M.L."/>
            <person name="Milosavljevic A."/>
            <person name="Miner G.R."/>
            <person name="Morgan M.B."/>
            <person name="Nazareth L.V."/>
            <person name="Scott G."/>
            <person name="Sodergren E."/>
            <person name="Song X.-Z."/>
            <person name="Steffen D."/>
            <person name="Wei S."/>
            <person name="Wheeler D.A."/>
            <person name="Wright M.W."/>
            <person name="Worley K.C."/>
            <person name="Yuan Y."/>
            <person name="Zhang Z."/>
            <person name="Adams C.Q."/>
            <person name="Ansari-Lari M.A."/>
            <person name="Ayele M."/>
            <person name="Brown M.J."/>
            <person name="Chen G."/>
            <person name="Chen Z."/>
            <person name="Clendenning J."/>
            <person name="Clerc-Blankenburg K.P."/>
            <person name="Chen R."/>
            <person name="Chen Z."/>
            <person name="Davis C."/>
            <person name="Delgado O."/>
            <person name="Dinh H.H."/>
            <person name="Dong W."/>
            <person name="Draper H."/>
            <person name="Ernst S."/>
            <person name="Fu G."/>
            <person name="Gonzalez-Garay M.L."/>
            <person name="Garcia D.K."/>
            <person name="Gillett W."/>
            <person name="Gu J."/>
            <person name="Hao B."/>
            <person name="Haugen E."/>
            <person name="Havlak P."/>
            <person name="He X."/>
            <person name="Hennig S."/>
            <person name="Hu S."/>
            <person name="Huang W."/>
            <person name="Jackson L.R."/>
            <person name="Jacob L.S."/>
            <person name="Kelly S.H."/>
            <person name="Kube M."/>
            <person name="Levy R."/>
            <person name="Li Z."/>
            <person name="Liu B."/>
            <person name="Liu J."/>
            <person name="Liu W."/>
            <person name="Lu J."/>
            <person name="Maheshwari M."/>
            <person name="Nguyen B.-V."/>
            <person name="Okwuonu G.O."/>
            <person name="Palmeiri A."/>
            <person name="Pasternak S."/>
            <person name="Perez L.M."/>
            <person name="Phelps K.A."/>
            <person name="Plopper F.J."/>
            <person name="Qiang B."/>
            <person name="Raymond C."/>
            <person name="Rodriguez R."/>
            <person name="Saenphimmachak C."/>
            <person name="Santibanez J."/>
            <person name="Shen H."/>
            <person name="Shen Y."/>
            <person name="Subramanian S."/>
            <person name="Tabor P.E."/>
            <person name="Verduzco D."/>
            <person name="Waldron L."/>
            <person name="Wang J."/>
            <person name="Wang J."/>
            <person name="Wang Q."/>
            <person name="Williams G.A."/>
            <person name="Wong G.K.-S."/>
            <person name="Yao Z."/>
            <person name="Zhang J."/>
            <person name="Zhang X."/>
            <person name="Zhao G."/>
            <person name="Zhou J."/>
            <person name="Zhou Y."/>
            <person name="Nelson D."/>
            <person name="Lehrach H."/>
            <person name="Reinhardt R."/>
            <person name="Naylor S.L."/>
            <person name="Yang H."/>
            <person name="Olson M."/>
            <person name="Weinstock G."/>
            <person name="Gibbs R.A."/>
        </authorList>
    </citation>
    <scope>NUCLEOTIDE SEQUENCE [LARGE SCALE GENOMIC DNA]</scope>
</reference>
<reference evidence="19 24" key="7">
    <citation type="submission" date="2005-09" db="EMBL/GenBank/DDBJ databases">
        <authorList>
            <person name="Mural R.J."/>
            <person name="Istrail S."/>
            <person name="Sutton G.G."/>
            <person name="Florea L."/>
            <person name="Halpern A.L."/>
            <person name="Mobarry C.M."/>
            <person name="Lippert R."/>
            <person name="Walenz B."/>
            <person name="Shatkay H."/>
            <person name="Dew I."/>
            <person name="Miller J.R."/>
            <person name="Flanigan M.J."/>
            <person name="Edwards N.J."/>
            <person name="Bolanos R."/>
            <person name="Fasulo D."/>
            <person name="Halldorsson B.V."/>
            <person name="Hannenhalli S."/>
            <person name="Turner R."/>
            <person name="Yooseph S."/>
            <person name="Lu F."/>
            <person name="Nusskern D.R."/>
            <person name="Shue B.C."/>
            <person name="Zheng X.H."/>
            <person name="Zhong F."/>
            <person name="Delcher A.L."/>
            <person name="Huson D.H."/>
            <person name="Kravitz S.A."/>
            <person name="Mouchard L."/>
            <person name="Reinert K."/>
            <person name="Remington K.A."/>
            <person name="Clark A.G."/>
            <person name="Waterman M.S."/>
            <person name="Eichler E.E."/>
            <person name="Adams M.D."/>
            <person name="Hunkapiller M.W."/>
            <person name="Myers E.W."/>
            <person name="Venter J.C."/>
        </authorList>
    </citation>
    <scope>NUCLEOTIDE SEQUENCE [LARGE SCALE GENOMIC DNA]</scope>
</reference>
<reference evidence="19 20" key="8">
    <citation type="journal article" date="2004" name="Genome Res.">
        <title>The status, quality, and expansion of the NIH full-length cDNA project: the Mammalian Gene Collection (MGC).</title>
        <authorList>
            <consortium name="The MGC Project Team"/>
        </authorList>
    </citation>
    <scope>NUCLEOTIDE SEQUENCE [LARGE SCALE MRNA] (ISOFORM 1)</scope>
    <scope>VARIANT THR-386</scope>
    <source>
        <tissue evidence="20">Skin</tissue>
    </source>
</reference>
<reference key="9">
    <citation type="journal article" date="2007" name="BMC Genomics">
        <title>The full-ORF clone resource of the German cDNA consortium.</title>
        <authorList>
            <person name="Bechtel S."/>
            <person name="Rosenfelder H."/>
            <person name="Duda A."/>
            <person name="Schmidt C.P."/>
            <person name="Ernst U."/>
            <person name="Wellenreuther R."/>
            <person name="Mehrle A."/>
            <person name="Schuster C."/>
            <person name="Bahr A."/>
            <person name="Bloecker H."/>
            <person name="Heubner D."/>
            <person name="Hoerlein A."/>
            <person name="Michel G."/>
            <person name="Wedler H."/>
            <person name="Koehrer K."/>
            <person name="Ottenwaelder B."/>
            <person name="Poustka A."/>
            <person name="Wiemann S."/>
            <person name="Schupp I."/>
        </authorList>
    </citation>
    <scope>NUCLEOTIDE SEQUENCE [LARGE SCALE MRNA] OF 47-465 (ISOFORM 1)</scope>
    <scope>VARIANT THR-386</scope>
    <source>
        <tissue>Melanoma</tissue>
    </source>
</reference>
<reference evidence="19" key="10">
    <citation type="journal article" date="2004" name="Am. J. Pathol.">
        <title>Increased expression of a Myc target gene Mina53 in human colon cancer.</title>
        <authorList>
            <person name="Teye K."/>
            <person name="Tsuneoka M."/>
            <person name="Arima N."/>
            <person name="Koda Y."/>
            <person name="Nakamura Y."/>
            <person name="Ueta Y."/>
            <person name="Shirouzu K."/>
            <person name="Kimura H."/>
        </authorList>
    </citation>
    <scope>FUNCTION</scope>
    <scope>TISSUE SPECIFICITY</scope>
</reference>
<reference evidence="19" key="11">
    <citation type="journal article" date="2004" name="Clin. Cancer Res.">
        <title>Mina53 as a potential prognostic factor for esophageal squamous cell carcinoma.</title>
        <authorList>
            <person name="Tsuneoka M."/>
            <person name="Fujita H."/>
            <person name="Arima N."/>
            <person name="Teye K."/>
            <person name="Okamura T."/>
            <person name="Inutsuka H."/>
            <person name="Koda Y."/>
            <person name="Shirouzu K."/>
            <person name="Kimura H."/>
        </authorList>
    </citation>
    <scope>FUNCTION</scope>
    <scope>TISSUE SPECIFICITY</scope>
</reference>
<reference evidence="19" key="12">
    <citation type="journal article" date="2005" name="Eur. J. Cell Biol.">
        <title>Protein NO52 -- a constitutive nucleolar component sharing high sequence homologies to protein NO66.</title>
        <authorList>
            <person name="Eilbracht J."/>
            <person name="Kneissel S."/>
            <person name="Hofmann A."/>
            <person name="Schmidt-Zachmann M.S."/>
        </authorList>
    </citation>
    <scope>FUNCTION</scope>
    <scope>SUBCELLULAR LOCATION</scope>
</reference>
<reference evidence="19" key="13">
    <citation type="journal article" date="2006" name="Kurume Med. J.">
        <title>Immunohistochemical expression of Mina53 and Ki67 proteins in human primary gingival squamous cell carcinoma.</title>
        <authorList>
            <person name="Kuratomi K."/>
            <person name="Yano H."/>
            <person name="Tsuneoka M."/>
            <person name="Sakamoto K."/>
            <person name="Kusukawa J."/>
            <person name="Kojiro M."/>
        </authorList>
    </citation>
    <scope>FUNCTION</scope>
</reference>
<reference key="14">
    <citation type="journal article" date="2009" name="Cell Cycle">
        <title>Lung cancer-associated JmjC domain protein mdig suppresses formation of tri-methyl lysine 9 of histone H3.</title>
        <authorList>
            <person name="Lu Y."/>
            <person name="Chang Q."/>
            <person name="Zhang Y."/>
            <person name="Beezhold K."/>
            <person name="Rojanasakul Y."/>
            <person name="Zhao H."/>
            <person name="Castranova V."/>
            <person name="Shi X."/>
            <person name="Chen F."/>
        </authorList>
    </citation>
    <scope>FUNCTION AS HISTONE DEMETHYLASE</scope>
    <scope>TISSUE SPECIFICITY</scope>
    <scope>MUTAGENESIS OF HIS-179</scope>
</reference>
<reference key="15">
    <citation type="journal article" date="2009" name="Science">
        <title>Lysine acetylation targets protein complexes and co-regulates major cellular functions.</title>
        <authorList>
            <person name="Choudhary C."/>
            <person name="Kumar C."/>
            <person name="Gnad F."/>
            <person name="Nielsen M.L."/>
            <person name="Rehman M."/>
            <person name="Walther T.C."/>
            <person name="Olsen J.V."/>
            <person name="Mann M."/>
        </authorList>
    </citation>
    <scope>IDENTIFICATION BY MASS SPECTROMETRY [LARGE SCALE ANALYSIS]</scope>
</reference>
<reference key="16">
    <citation type="journal article" date="2010" name="Sci. Signal.">
        <title>Quantitative phosphoproteomics reveals widespread full phosphorylation site occupancy during mitosis.</title>
        <authorList>
            <person name="Olsen J.V."/>
            <person name="Vermeulen M."/>
            <person name="Santamaria A."/>
            <person name="Kumar C."/>
            <person name="Miller M.L."/>
            <person name="Jensen L.J."/>
            <person name="Gnad F."/>
            <person name="Cox J."/>
            <person name="Jensen T.S."/>
            <person name="Nigg E.A."/>
            <person name="Brunak S."/>
            <person name="Mann M."/>
        </authorList>
    </citation>
    <scope>PHOSPHORYLATION [LARGE SCALE ANALYSIS] AT SER-309</scope>
    <scope>IDENTIFICATION BY MASS SPECTROMETRY [LARGE SCALE ANALYSIS]</scope>
    <source>
        <tissue>Cervix carcinoma</tissue>
    </source>
</reference>
<reference key="17">
    <citation type="journal article" date="2011" name="BMC Syst. Biol.">
        <title>Initial characterization of the human central proteome.</title>
        <authorList>
            <person name="Burkard T.R."/>
            <person name="Planyavsky M."/>
            <person name="Kaupe I."/>
            <person name="Breitwieser F.P."/>
            <person name="Buerckstuemmer T."/>
            <person name="Bennett K.L."/>
            <person name="Superti-Furga G."/>
            <person name="Colinge J."/>
        </authorList>
    </citation>
    <scope>IDENTIFICATION BY MASS SPECTROMETRY [LARGE SCALE ANALYSIS]</scope>
</reference>
<reference key="18">
    <citation type="journal article" date="2012" name="Nat. Chem. Biol.">
        <title>Oxygenase-catalyzed ribosome hydroxylation occurs in prokaryotes and humans.</title>
        <authorList>
            <person name="Ge W."/>
            <person name="Wolf A."/>
            <person name="Feng T."/>
            <person name="Ho C.H."/>
            <person name="Sekirnik R."/>
            <person name="Zayer A."/>
            <person name="Granatino N."/>
            <person name="Cockman M.E."/>
            <person name="Loenarz C."/>
            <person name="Loik N.D."/>
            <person name="Hardy A.P."/>
            <person name="Claridge T.D."/>
            <person name="Hamed R.B."/>
            <person name="Chowdhury R."/>
            <person name="Gong L."/>
            <person name="Robinson C.V."/>
            <person name="Trudgian D.C."/>
            <person name="Jiang M."/>
            <person name="Mackeen M.M."/>
            <person name="McCullagh J.S."/>
            <person name="Gordiyenko Y."/>
            <person name="Thalhammer A."/>
            <person name="Yamamoto A."/>
            <person name="Yang M."/>
            <person name="Liu-Yi P."/>
            <person name="Zhang Z."/>
            <person name="Schmidt-Zachmann M."/>
            <person name="Kessler B.M."/>
            <person name="Ratcliffe P.J."/>
            <person name="Preston G.M."/>
            <person name="Coleman M.L."/>
            <person name="Schofield C.J."/>
        </authorList>
    </citation>
    <scope>FUNCTION AS RPL27A HYDROXYLASE</scope>
    <scope>CATALYTIC ACTIVITY</scope>
</reference>
<feature type="chain" id="PRO_0000308377" description="Ribosomal oxygenase 2">
    <location>
        <begin position="1"/>
        <end position="465"/>
    </location>
</feature>
<feature type="domain" description="JmjC" evidence="2">
    <location>
        <begin position="139"/>
        <end position="271"/>
    </location>
</feature>
<feature type="binding site" evidence="19">
    <location>
        <position position="179"/>
    </location>
    <ligand>
        <name>Fe cation</name>
        <dbReference type="ChEBI" id="CHEBI:24875"/>
        <note>catalytic</note>
    </ligand>
</feature>
<feature type="binding site" evidence="2">
    <location>
        <position position="181"/>
    </location>
    <ligand>
        <name>Fe cation</name>
        <dbReference type="ChEBI" id="CHEBI:24875"/>
        <note>catalytic</note>
    </ligand>
</feature>
<feature type="binding site" evidence="2">
    <location>
        <position position="240"/>
    </location>
    <ligand>
        <name>Fe cation</name>
        <dbReference type="ChEBI" id="CHEBI:24875"/>
        <note>catalytic</note>
    </ligand>
</feature>
<feature type="modified residue" description="Phosphoserine" evidence="28">
    <location>
        <position position="309"/>
    </location>
</feature>
<feature type="splice variant" id="VSP_052587" description="In isoform 3." evidence="18">
    <location>
        <begin position="1"/>
        <end position="254"/>
    </location>
</feature>
<feature type="splice variant" id="VSP_052588" description="In isoform 3." evidence="18">
    <original>TISTYQN</original>
    <variation>MLLQVPC</variation>
    <location>
        <begin position="255"/>
        <end position="261"/>
    </location>
</feature>
<feature type="splice variant" id="VSP_052589" description="In isoform 2." evidence="16">
    <original>SWGDFLLDTISGLVFDTA</original>
    <variation>DAGARMRRCDLRAIAPQK</variation>
    <location>
        <begin position="263"/>
        <end position="280"/>
    </location>
</feature>
<feature type="splice variant" id="VSP_052590" description="In isoform 2." evidence="16">
    <location>
        <begin position="281"/>
        <end position="465"/>
    </location>
</feature>
<feature type="splice variant" id="VSP_038373" description="In isoform 4." evidence="16 17">
    <location>
        <position position="297"/>
    </location>
</feature>
<feature type="sequence variant" id="VAR_054079" description="In dbSNP:rs35391656.">
    <original>A</original>
    <variation>P</variation>
    <location>
        <position position="17"/>
    </location>
</feature>
<feature type="sequence variant" id="VAR_062241" description="In dbSNP:rs56183666.">
    <original>P</original>
    <variation>L</variation>
    <location>
        <position position="201"/>
    </location>
</feature>
<feature type="sequence variant" id="VAR_036811" description="In dbSNP:rs2172257." evidence="5 6 7 12">
    <original>A</original>
    <variation>T</variation>
    <location>
        <position position="386"/>
    </location>
</feature>
<feature type="mutagenesis site" description="Abolishes demethylase activity." evidence="13">
    <original>H</original>
    <variation>Y</variation>
    <location>
        <position position="179"/>
    </location>
</feature>
<feature type="sequence conflict" description="In Ref. 1; BAC16359." evidence="19" ref="1">
    <original>K</original>
    <variation>E</variation>
    <location>
        <position position="87"/>
    </location>
</feature>
<feature type="sequence conflict" description="In Ref. 1; BAC16359." evidence="19" ref="1">
    <original>N</original>
    <variation>S</variation>
    <location>
        <position position="107"/>
    </location>
</feature>
<feature type="sequence conflict" description="In Ref. 5; BAB55024." evidence="19" ref="5">
    <original>G</original>
    <variation>S</variation>
    <location>
        <position position="159"/>
    </location>
</feature>
<feature type="sequence conflict" description="In Ref. 1; BAC16359." evidence="19" ref="1">
    <original>V</original>
    <variation>A</variation>
    <location>
        <position position="221"/>
    </location>
</feature>
<feature type="helix" evidence="29">
    <location>
        <begin position="38"/>
        <end position="45"/>
    </location>
</feature>
<feature type="turn" evidence="29">
    <location>
        <begin position="46"/>
        <end position="48"/>
    </location>
</feature>
<feature type="helix" evidence="29">
    <location>
        <begin position="51"/>
        <end position="57"/>
    </location>
</feature>
<feature type="turn" evidence="29">
    <location>
        <begin position="58"/>
        <end position="61"/>
    </location>
</feature>
<feature type="strand" evidence="29">
    <location>
        <begin position="64"/>
        <end position="66"/>
    </location>
</feature>
<feature type="helix" evidence="29">
    <location>
        <begin position="71"/>
        <end position="80"/>
    </location>
</feature>
<feature type="helix" evidence="29">
    <location>
        <begin position="85"/>
        <end position="90"/>
    </location>
</feature>
<feature type="strand" evidence="29">
    <location>
        <begin position="94"/>
        <end position="96"/>
    </location>
</feature>
<feature type="turn" evidence="29">
    <location>
        <begin position="97"/>
        <end position="99"/>
    </location>
</feature>
<feature type="strand" evidence="29">
    <location>
        <begin position="100"/>
        <end position="106"/>
    </location>
</feature>
<feature type="strand" evidence="29">
    <location>
        <begin position="109"/>
        <end position="112"/>
    </location>
</feature>
<feature type="strand" evidence="29">
    <location>
        <begin position="116"/>
        <end position="119"/>
    </location>
</feature>
<feature type="helix" evidence="29">
    <location>
        <begin position="121"/>
        <end position="129"/>
    </location>
</feature>
<feature type="strand" evidence="29">
    <location>
        <begin position="134"/>
        <end position="138"/>
    </location>
</feature>
<feature type="helix" evidence="29">
    <location>
        <begin position="140"/>
        <end position="142"/>
    </location>
</feature>
<feature type="helix" evidence="29">
    <location>
        <begin position="145"/>
        <end position="158"/>
    </location>
</feature>
<feature type="strand" evidence="29">
    <location>
        <begin position="162"/>
        <end position="169"/>
    </location>
</feature>
<feature type="strand" evidence="29">
    <location>
        <begin position="178"/>
        <end position="180"/>
    </location>
</feature>
<feature type="strand" evidence="29">
    <location>
        <begin position="182"/>
        <end position="192"/>
    </location>
</feature>
<feature type="strand" evidence="29">
    <location>
        <begin position="194"/>
        <end position="199"/>
    </location>
</feature>
<feature type="helix" evidence="29">
    <location>
        <begin position="214"/>
        <end position="216"/>
    </location>
</feature>
<feature type="strand" evidence="29">
    <location>
        <begin position="221"/>
        <end position="226"/>
    </location>
</feature>
<feature type="strand" evidence="29">
    <location>
        <begin position="231"/>
        <end position="234"/>
    </location>
</feature>
<feature type="strand" evidence="29">
    <location>
        <begin position="239"/>
        <end position="243"/>
    </location>
</feature>
<feature type="strand" evidence="29">
    <location>
        <begin position="246"/>
        <end position="248"/>
    </location>
</feature>
<feature type="strand" evidence="29">
    <location>
        <begin position="251"/>
        <end position="258"/>
    </location>
</feature>
<feature type="helix" evidence="29">
    <location>
        <begin position="264"/>
        <end position="276"/>
    </location>
</feature>
<feature type="helix" evidence="29">
    <location>
        <begin position="284"/>
        <end position="287"/>
    </location>
</feature>
<feature type="helix" evidence="29">
    <location>
        <begin position="294"/>
        <end position="296"/>
    </location>
</feature>
<feature type="helix" evidence="29">
    <location>
        <begin position="302"/>
        <end position="321"/>
    </location>
</feature>
<feature type="helix" evidence="29">
    <location>
        <begin position="329"/>
        <end position="337"/>
    </location>
</feature>
<feature type="strand" evidence="29">
    <location>
        <begin position="344"/>
        <end position="348"/>
    </location>
</feature>
<feature type="turn" evidence="29">
    <location>
        <begin position="349"/>
        <end position="351"/>
    </location>
</feature>
<feature type="strand" evidence="29">
    <location>
        <begin position="363"/>
        <end position="366"/>
    </location>
</feature>
<feature type="helix" evidence="29">
    <location>
        <begin position="369"/>
        <end position="371"/>
    </location>
</feature>
<feature type="strand" evidence="29">
    <location>
        <begin position="372"/>
        <end position="375"/>
    </location>
</feature>
<feature type="strand" evidence="29">
    <location>
        <begin position="390"/>
        <end position="395"/>
    </location>
</feature>
<feature type="turn" evidence="29">
    <location>
        <begin position="402"/>
        <end position="405"/>
    </location>
</feature>
<feature type="strand" evidence="29">
    <location>
        <begin position="417"/>
        <end position="420"/>
    </location>
</feature>
<feature type="helix" evidence="29">
    <location>
        <begin position="421"/>
        <end position="423"/>
    </location>
</feature>
<feature type="helix" evidence="29">
    <location>
        <begin position="424"/>
        <end position="431"/>
    </location>
</feature>
<feature type="strand" evidence="29">
    <location>
        <begin position="434"/>
        <end position="437"/>
    </location>
</feature>
<feature type="helix" evidence="29">
    <location>
        <begin position="438"/>
        <end position="440"/>
    </location>
</feature>
<feature type="helix" evidence="29">
    <location>
        <begin position="446"/>
        <end position="458"/>
    </location>
</feature>
<feature type="strand" evidence="29">
    <location>
        <begin position="462"/>
        <end position="464"/>
    </location>
</feature>
<accession>Q8IUF8</accession>
<accession>D3DN35</accession>
<accession>Q6AHW4</accession>
<accession>Q6SKS0</accession>
<accession>Q8IU69</accession>
<accession>Q8IUF6</accession>
<accession>Q8IUF7</accession>
<accession>Q96C17</accession>
<accession>Q96KB0</accession>